<name>RS5_SALTI</name>
<dbReference type="EMBL" id="AL513382">
    <property type="protein sequence ID" value="CAD09163.1"/>
    <property type="molecule type" value="Genomic_DNA"/>
</dbReference>
<dbReference type="EMBL" id="AE014613">
    <property type="protein sequence ID" value="AAO71549.1"/>
    <property type="molecule type" value="Genomic_DNA"/>
</dbReference>
<dbReference type="RefSeq" id="NP_458477.1">
    <property type="nucleotide sequence ID" value="NC_003198.1"/>
</dbReference>
<dbReference type="RefSeq" id="WP_000940121.1">
    <property type="nucleotide sequence ID" value="NZ_WSUR01000046.1"/>
</dbReference>
<dbReference type="SMR" id="P0A7W5"/>
<dbReference type="STRING" id="220341.gene:17588203"/>
<dbReference type="GeneID" id="93778684"/>
<dbReference type="KEGG" id="stt:t4082"/>
<dbReference type="KEGG" id="sty:STY4375"/>
<dbReference type="PATRIC" id="fig|220341.7.peg.4471"/>
<dbReference type="eggNOG" id="COG0098">
    <property type="taxonomic scope" value="Bacteria"/>
</dbReference>
<dbReference type="HOGENOM" id="CLU_065898_2_2_6"/>
<dbReference type="OMA" id="GIKDVWT"/>
<dbReference type="OrthoDB" id="9809045at2"/>
<dbReference type="Proteomes" id="UP000000541">
    <property type="component" value="Chromosome"/>
</dbReference>
<dbReference type="Proteomes" id="UP000002670">
    <property type="component" value="Chromosome"/>
</dbReference>
<dbReference type="GO" id="GO:0015935">
    <property type="term" value="C:small ribosomal subunit"/>
    <property type="evidence" value="ECO:0007669"/>
    <property type="project" value="InterPro"/>
</dbReference>
<dbReference type="GO" id="GO:0019843">
    <property type="term" value="F:rRNA binding"/>
    <property type="evidence" value="ECO:0007669"/>
    <property type="project" value="UniProtKB-UniRule"/>
</dbReference>
<dbReference type="GO" id="GO:0003735">
    <property type="term" value="F:structural constituent of ribosome"/>
    <property type="evidence" value="ECO:0007669"/>
    <property type="project" value="InterPro"/>
</dbReference>
<dbReference type="GO" id="GO:0006412">
    <property type="term" value="P:translation"/>
    <property type="evidence" value="ECO:0007669"/>
    <property type="project" value="UniProtKB-UniRule"/>
</dbReference>
<dbReference type="FunFam" id="3.30.160.20:FF:000001">
    <property type="entry name" value="30S ribosomal protein S5"/>
    <property type="match status" value="1"/>
</dbReference>
<dbReference type="FunFam" id="3.30.230.10:FF:000002">
    <property type="entry name" value="30S ribosomal protein S5"/>
    <property type="match status" value="1"/>
</dbReference>
<dbReference type="Gene3D" id="3.30.160.20">
    <property type="match status" value="1"/>
</dbReference>
<dbReference type="Gene3D" id="3.30.230.10">
    <property type="match status" value="1"/>
</dbReference>
<dbReference type="HAMAP" id="MF_01307_B">
    <property type="entry name" value="Ribosomal_uS5_B"/>
    <property type="match status" value="1"/>
</dbReference>
<dbReference type="InterPro" id="IPR020568">
    <property type="entry name" value="Ribosomal_Su5_D2-typ_SF"/>
</dbReference>
<dbReference type="InterPro" id="IPR000851">
    <property type="entry name" value="Ribosomal_uS5"/>
</dbReference>
<dbReference type="InterPro" id="IPR005712">
    <property type="entry name" value="Ribosomal_uS5_bac-type"/>
</dbReference>
<dbReference type="InterPro" id="IPR005324">
    <property type="entry name" value="Ribosomal_uS5_C"/>
</dbReference>
<dbReference type="InterPro" id="IPR013810">
    <property type="entry name" value="Ribosomal_uS5_N"/>
</dbReference>
<dbReference type="InterPro" id="IPR018192">
    <property type="entry name" value="Ribosomal_uS5_N_CS"/>
</dbReference>
<dbReference type="InterPro" id="IPR014721">
    <property type="entry name" value="Ribsml_uS5_D2-typ_fold_subgr"/>
</dbReference>
<dbReference type="NCBIfam" id="TIGR01021">
    <property type="entry name" value="rpsE_bact"/>
    <property type="match status" value="1"/>
</dbReference>
<dbReference type="PANTHER" id="PTHR48277">
    <property type="entry name" value="MITOCHONDRIAL RIBOSOMAL PROTEIN S5"/>
    <property type="match status" value="1"/>
</dbReference>
<dbReference type="PANTHER" id="PTHR48277:SF1">
    <property type="entry name" value="MITOCHONDRIAL RIBOSOMAL PROTEIN S5"/>
    <property type="match status" value="1"/>
</dbReference>
<dbReference type="Pfam" id="PF00333">
    <property type="entry name" value="Ribosomal_S5"/>
    <property type="match status" value="1"/>
</dbReference>
<dbReference type="Pfam" id="PF03719">
    <property type="entry name" value="Ribosomal_S5_C"/>
    <property type="match status" value="1"/>
</dbReference>
<dbReference type="SUPFAM" id="SSF54768">
    <property type="entry name" value="dsRNA-binding domain-like"/>
    <property type="match status" value="1"/>
</dbReference>
<dbReference type="SUPFAM" id="SSF54211">
    <property type="entry name" value="Ribosomal protein S5 domain 2-like"/>
    <property type="match status" value="1"/>
</dbReference>
<dbReference type="PROSITE" id="PS00585">
    <property type="entry name" value="RIBOSOMAL_S5"/>
    <property type="match status" value="1"/>
</dbReference>
<dbReference type="PROSITE" id="PS50881">
    <property type="entry name" value="S5_DSRBD"/>
    <property type="match status" value="1"/>
</dbReference>
<organism>
    <name type="scientific">Salmonella typhi</name>
    <dbReference type="NCBI Taxonomy" id="90370"/>
    <lineage>
        <taxon>Bacteria</taxon>
        <taxon>Pseudomonadati</taxon>
        <taxon>Pseudomonadota</taxon>
        <taxon>Gammaproteobacteria</taxon>
        <taxon>Enterobacterales</taxon>
        <taxon>Enterobacteriaceae</taxon>
        <taxon>Salmonella</taxon>
    </lineage>
</organism>
<evidence type="ECO:0000250" key="1"/>
<evidence type="ECO:0000305" key="2"/>
<proteinExistence type="inferred from homology"/>
<feature type="initiator methionine" description="Removed" evidence="1">
    <location>
        <position position="1"/>
    </location>
</feature>
<feature type="chain" id="PRO_0000131588" description="Small ribosomal subunit protein uS5">
    <location>
        <begin position="2"/>
        <end position="167"/>
    </location>
</feature>
<feature type="domain" description="S5 DRBM">
    <location>
        <begin position="11"/>
        <end position="74"/>
    </location>
</feature>
<feature type="modified residue" description="N-acetylalanine" evidence="1">
    <location>
        <position position="2"/>
    </location>
</feature>
<accession>P0A7W5</accession>
<accession>O54299</accession>
<accession>P02356</accession>
<keyword id="KW-0007">Acetylation</keyword>
<keyword id="KW-0687">Ribonucleoprotein</keyword>
<keyword id="KW-0689">Ribosomal protein</keyword>
<keyword id="KW-0694">RNA-binding</keyword>
<keyword id="KW-0699">rRNA-binding</keyword>
<reference key="1">
    <citation type="journal article" date="2001" name="Nature">
        <title>Complete genome sequence of a multiple drug resistant Salmonella enterica serovar Typhi CT18.</title>
        <authorList>
            <person name="Parkhill J."/>
            <person name="Dougan G."/>
            <person name="James K.D."/>
            <person name="Thomson N.R."/>
            <person name="Pickard D."/>
            <person name="Wain J."/>
            <person name="Churcher C.M."/>
            <person name="Mungall K.L."/>
            <person name="Bentley S.D."/>
            <person name="Holden M.T.G."/>
            <person name="Sebaihia M."/>
            <person name="Baker S."/>
            <person name="Basham D."/>
            <person name="Brooks K."/>
            <person name="Chillingworth T."/>
            <person name="Connerton P."/>
            <person name="Cronin A."/>
            <person name="Davis P."/>
            <person name="Davies R.M."/>
            <person name="Dowd L."/>
            <person name="White N."/>
            <person name="Farrar J."/>
            <person name="Feltwell T."/>
            <person name="Hamlin N."/>
            <person name="Haque A."/>
            <person name="Hien T.T."/>
            <person name="Holroyd S."/>
            <person name="Jagels K."/>
            <person name="Krogh A."/>
            <person name="Larsen T.S."/>
            <person name="Leather S."/>
            <person name="Moule S."/>
            <person name="O'Gaora P."/>
            <person name="Parry C."/>
            <person name="Quail M.A."/>
            <person name="Rutherford K.M."/>
            <person name="Simmonds M."/>
            <person name="Skelton J."/>
            <person name="Stevens K."/>
            <person name="Whitehead S."/>
            <person name="Barrell B.G."/>
        </authorList>
    </citation>
    <scope>NUCLEOTIDE SEQUENCE [LARGE SCALE GENOMIC DNA]</scope>
    <source>
        <strain>CT18</strain>
    </source>
</reference>
<reference key="2">
    <citation type="journal article" date="2003" name="J. Bacteriol.">
        <title>Comparative genomics of Salmonella enterica serovar Typhi strains Ty2 and CT18.</title>
        <authorList>
            <person name="Deng W."/>
            <person name="Liou S.-R."/>
            <person name="Plunkett G. III"/>
            <person name="Mayhew G.F."/>
            <person name="Rose D.J."/>
            <person name="Burland V."/>
            <person name="Kodoyianni V."/>
            <person name="Schwartz D.C."/>
            <person name="Blattner F.R."/>
        </authorList>
    </citation>
    <scope>NUCLEOTIDE SEQUENCE [LARGE SCALE GENOMIC DNA]</scope>
    <source>
        <strain>ATCC 700931 / Ty2</strain>
    </source>
</reference>
<gene>
    <name type="primary">rpsE</name>
    <name type="ordered locus">STY4375</name>
    <name type="ordered locus">t4082</name>
</gene>
<comment type="function">
    <text evidence="1">With S4 and S12 plays an important role in translational accuracy.</text>
</comment>
<comment type="function">
    <text evidence="1">Located at the back of the 30S subunit body where it stabilizes the conformation of the head with respect to the body.</text>
</comment>
<comment type="subunit">
    <text evidence="1">Part of the 30S ribosomal subunit. Contacts proteins S4 and S8 (By similarity).</text>
</comment>
<comment type="domain">
    <text>The N-terminal domain interacts with the head of the 30S subunit; the C-terminal domain interacts with the body and contacts protein S4. The interaction surface between S4 and S5 is involved in control of translational fidelity.</text>
</comment>
<comment type="similarity">
    <text evidence="2">Belongs to the universal ribosomal protein uS5 family.</text>
</comment>
<protein>
    <recommendedName>
        <fullName evidence="2">Small ribosomal subunit protein uS5</fullName>
    </recommendedName>
    <alternativeName>
        <fullName>30S ribosomal protein S5</fullName>
    </alternativeName>
</protein>
<sequence>MAHIEKQAGELQEKLIAVNRVSKTVKGGRIFSFTALTVVGDGNGRVGFGYGKAREVPAAIQKAMEKARRNMINVALNNGTLQHPVKGVHTGSRVFMQPASEGTGIIAGGAMRAVLEVAGVHNVLAKAYGSTNPINVVRATIDGLENMNSPEMVAAKRGKSVEEILGK</sequence>